<dbReference type="EMBL" id="BA000031">
    <property type="protein sequence ID" value="BAC58361.1"/>
    <property type="molecule type" value="Genomic_DNA"/>
</dbReference>
<dbReference type="RefSeq" id="NP_796477.1">
    <property type="nucleotide sequence ID" value="NC_004603.1"/>
</dbReference>
<dbReference type="RefSeq" id="WP_005456852.1">
    <property type="nucleotide sequence ID" value="NC_004603.1"/>
</dbReference>
<dbReference type="SMR" id="Q87TH1"/>
<dbReference type="GeneID" id="1187565"/>
<dbReference type="KEGG" id="vpa:VP0098"/>
<dbReference type="PATRIC" id="fig|223926.6.peg.93"/>
<dbReference type="eggNOG" id="COG1826">
    <property type="taxonomic scope" value="Bacteria"/>
</dbReference>
<dbReference type="HOGENOM" id="CLU_086034_5_1_6"/>
<dbReference type="Proteomes" id="UP000002493">
    <property type="component" value="Chromosome 1"/>
</dbReference>
<dbReference type="GO" id="GO:0033281">
    <property type="term" value="C:TAT protein transport complex"/>
    <property type="evidence" value="ECO:0007669"/>
    <property type="project" value="UniProtKB-UniRule"/>
</dbReference>
<dbReference type="GO" id="GO:0008320">
    <property type="term" value="F:protein transmembrane transporter activity"/>
    <property type="evidence" value="ECO:0007669"/>
    <property type="project" value="UniProtKB-UniRule"/>
</dbReference>
<dbReference type="GO" id="GO:0043953">
    <property type="term" value="P:protein transport by the Tat complex"/>
    <property type="evidence" value="ECO:0007669"/>
    <property type="project" value="UniProtKB-UniRule"/>
</dbReference>
<dbReference type="FunFam" id="1.20.5.3310:FF:000001">
    <property type="entry name" value="Probable Sec-independent protein translocase protein TatE"/>
    <property type="match status" value="1"/>
</dbReference>
<dbReference type="Gene3D" id="1.20.5.3310">
    <property type="match status" value="1"/>
</dbReference>
<dbReference type="HAMAP" id="MF_00236">
    <property type="entry name" value="TatA_E"/>
    <property type="match status" value="1"/>
</dbReference>
<dbReference type="InterPro" id="IPR003369">
    <property type="entry name" value="TatA/B/E"/>
</dbReference>
<dbReference type="InterPro" id="IPR006312">
    <property type="entry name" value="TatA/E"/>
</dbReference>
<dbReference type="NCBIfam" id="NF002813">
    <property type="entry name" value="PRK02958.1"/>
    <property type="match status" value="1"/>
</dbReference>
<dbReference type="NCBIfam" id="NF002960">
    <property type="entry name" value="PRK03625.1"/>
    <property type="match status" value="1"/>
</dbReference>
<dbReference type="NCBIfam" id="NF003396">
    <property type="entry name" value="PRK04598.1"/>
    <property type="match status" value="1"/>
</dbReference>
<dbReference type="NCBIfam" id="TIGR01411">
    <property type="entry name" value="tatAE"/>
    <property type="match status" value="1"/>
</dbReference>
<dbReference type="PANTHER" id="PTHR42982">
    <property type="entry name" value="SEC-INDEPENDENT PROTEIN TRANSLOCASE PROTEIN TATA"/>
    <property type="match status" value="1"/>
</dbReference>
<dbReference type="PANTHER" id="PTHR42982:SF1">
    <property type="entry name" value="SEC-INDEPENDENT PROTEIN TRANSLOCASE PROTEIN TATA"/>
    <property type="match status" value="1"/>
</dbReference>
<dbReference type="Pfam" id="PF02416">
    <property type="entry name" value="TatA_B_E"/>
    <property type="match status" value="1"/>
</dbReference>
<sequence>MGGISVWQLLIIAVIVVLLFGTKKLRGIGGDLGSAVKGFKKAMSDEDSAKNEKDADFEPKSLEKQQQKEAAPETKKDKEQA</sequence>
<feature type="chain" id="PRO_0000097963" description="Sec-independent protein translocase protein TatA">
    <location>
        <begin position="1"/>
        <end position="81"/>
    </location>
</feature>
<feature type="transmembrane region" description="Helical" evidence="1">
    <location>
        <begin position="1"/>
        <end position="21"/>
    </location>
</feature>
<feature type="region of interest" description="Disordered" evidence="2">
    <location>
        <begin position="42"/>
        <end position="81"/>
    </location>
</feature>
<comment type="function">
    <text evidence="1">Part of the twin-arginine translocation (Tat) system that transports large folded proteins containing a characteristic twin-arginine motif in their signal peptide across membranes. TatA could form the protein-conducting channel of the Tat system.</text>
</comment>
<comment type="subunit">
    <text evidence="1">The Tat system comprises two distinct complexes: a TatABC complex, containing multiple copies of TatA, TatB and TatC subunits, and a separate TatA complex, containing only TatA subunits. Substrates initially bind to the TatABC complex, which probably triggers association of the separate TatA complex to form the active translocon.</text>
</comment>
<comment type="subcellular location">
    <subcellularLocation>
        <location evidence="1">Cell inner membrane</location>
        <topology evidence="1">Single-pass membrane protein</topology>
    </subcellularLocation>
</comment>
<comment type="similarity">
    <text evidence="1">Belongs to the TatA/E family.</text>
</comment>
<reference key="1">
    <citation type="journal article" date="2003" name="Lancet">
        <title>Genome sequence of Vibrio parahaemolyticus: a pathogenic mechanism distinct from that of V. cholerae.</title>
        <authorList>
            <person name="Makino K."/>
            <person name="Oshima K."/>
            <person name="Kurokawa K."/>
            <person name="Yokoyama K."/>
            <person name="Uda T."/>
            <person name="Tagomori K."/>
            <person name="Iijima Y."/>
            <person name="Najima M."/>
            <person name="Nakano M."/>
            <person name="Yamashita A."/>
            <person name="Kubota Y."/>
            <person name="Kimura S."/>
            <person name="Yasunaga T."/>
            <person name="Honda T."/>
            <person name="Shinagawa H."/>
            <person name="Hattori M."/>
            <person name="Iida T."/>
        </authorList>
    </citation>
    <scope>NUCLEOTIDE SEQUENCE [LARGE SCALE GENOMIC DNA]</scope>
    <source>
        <strain>RIMD 2210633</strain>
    </source>
</reference>
<evidence type="ECO:0000255" key="1">
    <source>
        <dbReference type="HAMAP-Rule" id="MF_00236"/>
    </source>
</evidence>
<evidence type="ECO:0000256" key="2">
    <source>
        <dbReference type="SAM" id="MobiDB-lite"/>
    </source>
</evidence>
<accession>Q87TH1</accession>
<protein>
    <recommendedName>
        <fullName evidence="1">Sec-independent protein translocase protein TatA</fullName>
    </recommendedName>
</protein>
<proteinExistence type="inferred from homology"/>
<gene>
    <name evidence="1" type="primary">tatA</name>
    <name type="ordered locus">VP0098</name>
</gene>
<keyword id="KW-0997">Cell inner membrane</keyword>
<keyword id="KW-1003">Cell membrane</keyword>
<keyword id="KW-0472">Membrane</keyword>
<keyword id="KW-0653">Protein transport</keyword>
<keyword id="KW-0811">Translocation</keyword>
<keyword id="KW-0812">Transmembrane</keyword>
<keyword id="KW-1133">Transmembrane helix</keyword>
<keyword id="KW-0813">Transport</keyword>
<name>TATA_VIBPA</name>
<organism>
    <name type="scientific">Vibrio parahaemolyticus serotype O3:K6 (strain RIMD 2210633)</name>
    <dbReference type="NCBI Taxonomy" id="223926"/>
    <lineage>
        <taxon>Bacteria</taxon>
        <taxon>Pseudomonadati</taxon>
        <taxon>Pseudomonadota</taxon>
        <taxon>Gammaproteobacteria</taxon>
        <taxon>Vibrionales</taxon>
        <taxon>Vibrionaceae</taxon>
        <taxon>Vibrio</taxon>
    </lineage>
</organism>